<protein>
    <recommendedName>
        <fullName evidence="1">ATP-dependent zinc metalloprotease FtsH 1</fullName>
        <ecNumber evidence="1">3.4.24.-</ecNumber>
    </recommendedName>
</protein>
<reference key="1">
    <citation type="submission" date="2010-04" db="EMBL/GenBank/DDBJ databases">
        <title>Genome sequence of Salinibacter ruber M8.</title>
        <authorList>
            <consortium name="Genoscope"/>
        </authorList>
    </citation>
    <scope>NUCLEOTIDE SEQUENCE [LARGE SCALE GENOMIC DNA]</scope>
    <source>
        <strain>M8</strain>
    </source>
</reference>
<dbReference type="EC" id="3.4.24.-" evidence="1"/>
<dbReference type="EMBL" id="FP565814">
    <property type="protein sequence ID" value="CBH24150.1"/>
    <property type="molecule type" value="Genomic_DNA"/>
</dbReference>
<dbReference type="SMR" id="D5H7Z5"/>
<dbReference type="KEGG" id="srm:SRM_01229"/>
<dbReference type="PATRIC" id="fig|761659.10.peg.1356"/>
<dbReference type="HOGENOM" id="CLU_000688_16_2_10"/>
<dbReference type="Proteomes" id="UP000000933">
    <property type="component" value="Chromosome"/>
</dbReference>
<dbReference type="GO" id="GO:0005886">
    <property type="term" value="C:plasma membrane"/>
    <property type="evidence" value="ECO:0007669"/>
    <property type="project" value="UniProtKB-SubCell"/>
</dbReference>
<dbReference type="GO" id="GO:0005524">
    <property type="term" value="F:ATP binding"/>
    <property type="evidence" value="ECO:0007669"/>
    <property type="project" value="UniProtKB-UniRule"/>
</dbReference>
<dbReference type="GO" id="GO:0016887">
    <property type="term" value="F:ATP hydrolysis activity"/>
    <property type="evidence" value="ECO:0007669"/>
    <property type="project" value="UniProtKB-UniRule"/>
</dbReference>
<dbReference type="GO" id="GO:0004176">
    <property type="term" value="F:ATP-dependent peptidase activity"/>
    <property type="evidence" value="ECO:0007669"/>
    <property type="project" value="InterPro"/>
</dbReference>
<dbReference type="GO" id="GO:0004222">
    <property type="term" value="F:metalloendopeptidase activity"/>
    <property type="evidence" value="ECO:0007669"/>
    <property type="project" value="InterPro"/>
</dbReference>
<dbReference type="GO" id="GO:0008270">
    <property type="term" value="F:zinc ion binding"/>
    <property type="evidence" value="ECO:0007669"/>
    <property type="project" value="UniProtKB-UniRule"/>
</dbReference>
<dbReference type="GO" id="GO:0030163">
    <property type="term" value="P:protein catabolic process"/>
    <property type="evidence" value="ECO:0007669"/>
    <property type="project" value="UniProtKB-UniRule"/>
</dbReference>
<dbReference type="GO" id="GO:0006508">
    <property type="term" value="P:proteolysis"/>
    <property type="evidence" value="ECO:0007669"/>
    <property type="project" value="UniProtKB-KW"/>
</dbReference>
<dbReference type="CDD" id="cd19501">
    <property type="entry name" value="RecA-like_FtsH"/>
    <property type="match status" value="1"/>
</dbReference>
<dbReference type="FunFam" id="1.20.58.760:FF:000003">
    <property type="entry name" value="AFG3-like AAA ATPase 2"/>
    <property type="match status" value="1"/>
</dbReference>
<dbReference type="FunFam" id="1.10.8.60:FF:000001">
    <property type="entry name" value="ATP-dependent zinc metalloprotease FtsH"/>
    <property type="match status" value="1"/>
</dbReference>
<dbReference type="FunFam" id="3.40.50.300:FF:000001">
    <property type="entry name" value="ATP-dependent zinc metalloprotease FtsH"/>
    <property type="match status" value="1"/>
</dbReference>
<dbReference type="Gene3D" id="1.10.8.60">
    <property type="match status" value="1"/>
</dbReference>
<dbReference type="Gene3D" id="3.30.720.210">
    <property type="match status" value="1"/>
</dbReference>
<dbReference type="Gene3D" id="3.40.50.300">
    <property type="entry name" value="P-loop containing nucleotide triphosphate hydrolases"/>
    <property type="match status" value="1"/>
</dbReference>
<dbReference type="Gene3D" id="1.20.58.760">
    <property type="entry name" value="Peptidase M41"/>
    <property type="match status" value="1"/>
</dbReference>
<dbReference type="HAMAP" id="MF_01458">
    <property type="entry name" value="FtsH"/>
    <property type="match status" value="1"/>
</dbReference>
<dbReference type="InterPro" id="IPR003593">
    <property type="entry name" value="AAA+_ATPase"/>
</dbReference>
<dbReference type="InterPro" id="IPR041569">
    <property type="entry name" value="AAA_lid_3"/>
</dbReference>
<dbReference type="InterPro" id="IPR050928">
    <property type="entry name" value="ATP-dep_Zn_Metalloprotease"/>
</dbReference>
<dbReference type="InterPro" id="IPR003959">
    <property type="entry name" value="ATPase_AAA_core"/>
</dbReference>
<dbReference type="InterPro" id="IPR003960">
    <property type="entry name" value="ATPase_AAA_CS"/>
</dbReference>
<dbReference type="InterPro" id="IPR005936">
    <property type="entry name" value="FtsH"/>
</dbReference>
<dbReference type="InterPro" id="IPR027417">
    <property type="entry name" value="P-loop_NTPase"/>
</dbReference>
<dbReference type="InterPro" id="IPR011546">
    <property type="entry name" value="Pept_M41_FtsH_extracell"/>
</dbReference>
<dbReference type="InterPro" id="IPR000642">
    <property type="entry name" value="Peptidase_M41"/>
</dbReference>
<dbReference type="InterPro" id="IPR037219">
    <property type="entry name" value="Peptidase_M41-like"/>
</dbReference>
<dbReference type="NCBIfam" id="TIGR01241">
    <property type="entry name" value="FtsH_fam"/>
    <property type="match status" value="1"/>
</dbReference>
<dbReference type="PANTHER" id="PTHR43655:SF2">
    <property type="entry name" value="AFG3 LIKE MATRIX AAA PEPTIDASE SUBUNIT 2, ISOFORM A"/>
    <property type="match status" value="1"/>
</dbReference>
<dbReference type="PANTHER" id="PTHR43655">
    <property type="entry name" value="ATP-DEPENDENT PROTEASE"/>
    <property type="match status" value="1"/>
</dbReference>
<dbReference type="Pfam" id="PF00004">
    <property type="entry name" value="AAA"/>
    <property type="match status" value="1"/>
</dbReference>
<dbReference type="Pfam" id="PF17862">
    <property type="entry name" value="AAA_lid_3"/>
    <property type="match status" value="1"/>
</dbReference>
<dbReference type="Pfam" id="PF06480">
    <property type="entry name" value="FtsH_ext"/>
    <property type="match status" value="1"/>
</dbReference>
<dbReference type="Pfam" id="PF01434">
    <property type="entry name" value="Peptidase_M41"/>
    <property type="match status" value="1"/>
</dbReference>
<dbReference type="SMART" id="SM00382">
    <property type="entry name" value="AAA"/>
    <property type="match status" value="1"/>
</dbReference>
<dbReference type="SUPFAM" id="SSF140990">
    <property type="entry name" value="FtsH protease domain-like"/>
    <property type="match status" value="1"/>
</dbReference>
<dbReference type="SUPFAM" id="SSF52540">
    <property type="entry name" value="P-loop containing nucleoside triphosphate hydrolases"/>
    <property type="match status" value="1"/>
</dbReference>
<dbReference type="PROSITE" id="PS00674">
    <property type="entry name" value="AAA"/>
    <property type="match status" value="1"/>
</dbReference>
<proteinExistence type="inferred from homology"/>
<accession>D5H7Z5</accession>
<evidence type="ECO:0000255" key="1">
    <source>
        <dbReference type="HAMAP-Rule" id="MF_01458"/>
    </source>
</evidence>
<evidence type="ECO:0000256" key="2">
    <source>
        <dbReference type="SAM" id="MobiDB-lite"/>
    </source>
</evidence>
<organism>
    <name type="scientific">Salinibacter ruber (strain M8)</name>
    <dbReference type="NCBI Taxonomy" id="761659"/>
    <lineage>
        <taxon>Bacteria</taxon>
        <taxon>Pseudomonadati</taxon>
        <taxon>Rhodothermota</taxon>
        <taxon>Rhodothermia</taxon>
        <taxon>Rhodothermales</taxon>
        <taxon>Salinibacteraceae</taxon>
        <taxon>Salinibacter</taxon>
    </lineage>
</organism>
<comment type="function">
    <text evidence="1">Acts as a processive, ATP-dependent zinc metallopeptidase for both cytoplasmic and membrane proteins. Plays a role in the quality control of integral membrane proteins.</text>
</comment>
<comment type="cofactor">
    <cofactor evidence="1">
        <name>Zn(2+)</name>
        <dbReference type="ChEBI" id="CHEBI:29105"/>
    </cofactor>
    <text evidence="1">Binds 1 zinc ion per subunit.</text>
</comment>
<comment type="subunit">
    <text evidence="1">Homohexamer.</text>
</comment>
<comment type="subcellular location">
    <subcellularLocation>
        <location evidence="1">Cell inner membrane</location>
        <topology evidence="1">Multi-pass membrane protein</topology>
        <orientation evidence="1">Cytoplasmic side</orientation>
    </subcellularLocation>
</comment>
<comment type="similarity">
    <text evidence="1">In the central section; belongs to the AAA ATPase family.</text>
</comment>
<comment type="similarity">
    <text evidence="1">In the C-terminal section; belongs to the peptidase M41 family.</text>
</comment>
<keyword id="KW-0067">ATP-binding</keyword>
<keyword id="KW-0997">Cell inner membrane</keyword>
<keyword id="KW-1003">Cell membrane</keyword>
<keyword id="KW-0378">Hydrolase</keyword>
<keyword id="KW-0472">Membrane</keyword>
<keyword id="KW-0479">Metal-binding</keyword>
<keyword id="KW-0482">Metalloprotease</keyword>
<keyword id="KW-0547">Nucleotide-binding</keyword>
<keyword id="KW-0645">Protease</keyword>
<keyword id="KW-0812">Transmembrane</keyword>
<keyword id="KW-1133">Transmembrane helix</keyword>
<keyword id="KW-0862">Zinc</keyword>
<name>FTSH1_SALRM</name>
<sequence length="686" mass="74264">MCFCIVSSPEAMHSNADSPSSGPGLQPVWTTLRSPYVFWIGGAILLALLVHLGIKWQQASAPVRIEYSTFLEHVESGYVERVEIVNGKRINGTYTAAAVQNDRVETRPPPAAPMGAVVDRSRRAFATHKPTAHELTAFLRRHNEAATGTGTAPVTFAATQESDWVGTLLLWGLPLGLIVGIWLFFMRRMATGGREEQIGSDTAALFEEAGGRRVTFDDVAGLAEPKEEVAEVVEFLRRPQKFTRLGGALPTGVLLVGPPGTGKTLLAKAVAGEAGVPFASISGSDFMEMFVGVGASRVRDLFDQAKERAPCIIFIDEVDAIGRTRGGPGGAGTGERDNTLNQLLVEMDGFDSDEGVVIMAATNRPDVLDAALLRPGRFDRQISIHKPDRLERADIFRVHVADLRLDASVDPEALARQTPGFAGAEIANVCNEAALLAARRGRNAVQMDDFDQALDRVMAGLERSNKLISPEERRVIAHHESGHAIVGWFLEHTDPVVKVSVVPRGLSALGHAQHLPKERDLYSREALMDRMTMALGGRGAEEIVFGRATTGAKDDLERVTETAYAMVVDYGMSDRIGPLSYNRAERRADGPLFEKPYSDAMAAAIDEEVADIVREARARANDLLREKRPLLDEMAERLLREEVLGVEALVALLGSPPHGEYAWLKEGDGTSRNSASAEGASPSSQG</sequence>
<gene>
    <name evidence="1" type="primary">ftsH1</name>
    <name type="ordered locus">SRM_01229</name>
</gene>
<feature type="chain" id="PRO_0000400388" description="ATP-dependent zinc metalloprotease FtsH 1">
    <location>
        <begin position="1"/>
        <end position="686"/>
    </location>
</feature>
<feature type="topological domain" description="Cytoplasmic" evidence="1">
    <location>
        <begin position="1"/>
        <end position="33"/>
    </location>
</feature>
<feature type="transmembrane region" description="Helical" evidence="1">
    <location>
        <begin position="34"/>
        <end position="54"/>
    </location>
</feature>
<feature type="topological domain" description="Periplasmic" evidence="1">
    <location>
        <begin position="55"/>
        <end position="164"/>
    </location>
</feature>
<feature type="transmembrane region" description="Helical" evidence="1">
    <location>
        <begin position="165"/>
        <end position="185"/>
    </location>
</feature>
<feature type="topological domain" description="Cytoplasmic" evidence="1">
    <location>
        <begin position="186"/>
        <end position="686"/>
    </location>
</feature>
<feature type="region of interest" description="Disordered" evidence="2">
    <location>
        <begin position="661"/>
        <end position="686"/>
    </location>
</feature>
<feature type="compositionally biased region" description="Polar residues" evidence="2">
    <location>
        <begin position="670"/>
        <end position="686"/>
    </location>
</feature>
<feature type="active site" evidence="1">
    <location>
        <position position="480"/>
    </location>
</feature>
<feature type="binding site" evidence="1">
    <location>
        <begin position="257"/>
        <end position="264"/>
    </location>
    <ligand>
        <name>ATP</name>
        <dbReference type="ChEBI" id="CHEBI:30616"/>
    </ligand>
</feature>
<feature type="binding site" evidence="1">
    <location>
        <position position="479"/>
    </location>
    <ligand>
        <name>Zn(2+)</name>
        <dbReference type="ChEBI" id="CHEBI:29105"/>
        <note>catalytic</note>
    </ligand>
</feature>
<feature type="binding site" evidence="1">
    <location>
        <position position="483"/>
    </location>
    <ligand>
        <name>Zn(2+)</name>
        <dbReference type="ChEBI" id="CHEBI:29105"/>
        <note>catalytic</note>
    </ligand>
</feature>
<feature type="binding site" evidence="1">
    <location>
        <position position="555"/>
    </location>
    <ligand>
        <name>Zn(2+)</name>
        <dbReference type="ChEBI" id="CHEBI:29105"/>
        <note>catalytic</note>
    </ligand>
</feature>